<comment type="function">
    <text evidence="1">DNA-dependent RNA polymerase catalyzes the transcription of DNA into RNA using the four ribonucleoside triphosphates as substrates.</text>
</comment>
<comment type="catalytic activity">
    <reaction evidence="1">
        <text>RNA(n) + a ribonucleoside 5'-triphosphate = RNA(n+1) + diphosphate</text>
        <dbReference type="Rhea" id="RHEA:21248"/>
        <dbReference type="Rhea" id="RHEA-COMP:14527"/>
        <dbReference type="Rhea" id="RHEA-COMP:17342"/>
        <dbReference type="ChEBI" id="CHEBI:33019"/>
        <dbReference type="ChEBI" id="CHEBI:61557"/>
        <dbReference type="ChEBI" id="CHEBI:140395"/>
        <dbReference type="EC" id="2.7.7.6"/>
    </reaction>
</comment>
<comment type="subunit">
    <text evidence="1">The RNAP catalytic core consists of 2 alpha, 1 beta, 1 beta' and 1 omega subunit. When a sigma factor is associated with the core the holoenzyme is formed, which can initiate transcription.</text>
</comment>
<comment type="similarity">
    <text evidence="1">Belongs to the RNA polymerase beta chain family.</text>
</comment>
<gene>
    <name evidence="1" type="primary">rpoB</name>
    <name type="ordered locus">Ent638_0197</name>
</gene>
<keyword id="KW-0240">DNA-directed RNA polymerase</keyword>
<keyword id="KW-0548">Nucleotidyltransferase</keyword>
<keyword id="KW-0804">Transcription</keyword>
<keyword id="KW-0808">Transferase</keyword>
<evidence type="ECO:0000255" key="1">
    <source>
        <dbReference type="HAMAP-Rule" id="MF_01321"/>
    </source>
</evidence>
<name>RPOB_ENT38</name>
<accession>A4W5A7</accession>
<protein>
    <recommendedName>
        <fullName evidence="1">DNA-directed RNA polymerase subunit beta</fullName>
        <shortName evidence="1">RNAP subunit beta</shortName>
        <ecNumber evidence="1">2.7.7.6</ecNumber>
    </recommendedName>
    <alternativeName>
        <fullName evidence="1">RNA polymerase subunit beta</fullName>
    </alternativeName>
    <alternativeName>
        <fullName evidence="1">Transcriptase subunit beta</fullName>
    </alternativeName>
</protein>
<proteinExistence type="inferred from homology"/>
<sequence length="1342" mass="150473">MVYSYTEKKRIRKDFGKRPQVLDIPYLLSIQLDSFQKFIEQDPEGQYGLEAAFRSVFPIKSYSGNSELQYVSYRLGEPVFDVQECQIRGVTYSAPLRVKLRLVVYEREAPEGTVKDIKEQEVYMGEIPLMTDNGTFVINGTERVIVSQLHRSPGVFFDSDKGKTHSSGKVLYNARIIPYRGSWLDFEFDPKDNLFVRIDRRRKLPATIILRALQYTTEQILDLFFEKVIFEIRDNKLQMELLPERLRGETASFDIEFDGKVYVEKGRRITARHIRQLEKDDIKLIEVPVEYIAGKVAAKDYVDASTGELICPANMELSLDLLAKLSQSGHKRIETLFTNDLDHGAYMSETIRVDPTSDRLSALVEIYRMMRPGEPPTREAAENLFENLFFSEDRYDLSAVGRMKFNRSLLRDAIEGSGILSKEDIIEVMKKLIDIRNGKGEVDDIDHLGNRRIRSVGEMAENQFRVGLVRVERAVKERLSLGDLDTLMPQDMINAKPISAAVKEFFGSSQLSQFMDQNNPLSEITHKRRISALGPGGLTRERAGFEVRDVHPTHYGRVCPIETPEGPNIGLINSLSVYAQTNEYGFLETPYRKVTDGVVTDEIHYLSAIEEGNYVIAQANTNLDEEGRFVDDLVTCRSKGESSLFSNDQVDYMDVSTQQIVSVGASLIPFLEHDDANRALMGANMQRQAVPTLRADKPLVGTGMERAVAVDSGVTAVAKRGGTVQYVDASRIVIKVNEDEMYPGEAGIDIYNLTKYTRSNQNTCINQMPCVSLGEPVERGDVLADGPSTDLGELALGQNMRVAFMPWNGYNFEDSILVSERVVQEDRFTTIHIQELACVSRDTKLGPEEITADIPNVGEAALSKLDESGIVYIGAEVTGGDILVGKVTPKGETQLTPEEKLLRAIFGEKASDVKDSSLRVPNGVSGTIIDVQVFTRDGVEKDKRALEIEEMQLKQAKKDLSEELQILEAGLFSRIYAVLVSGGVEAEKLDKLPRDRWLELGLTDEEKQNQLEQLAEQYDELKHEFEKKLEAKRRKITQGDDLAPGVLKIVKVYLAVKRQIQPGDKMAGRHGNKGVISKINPIEDMPHDANGTPVDIVLNPLGVPSRMNIGQILETHLGMAAKGIGEKINAMLKQQEEVAKLREFIQRAYDLGTDVRQKVDLNTFSDDEVLRLAENLKKGMPIATPVFDGAKESEIKELLQLGGLPTSGQITLFDGRTGEQFERQVTVGYMYMLKLNHLVDDKMHARSTGSYSLVTQQPLGGKAQFGGQRFGEMEVWALEAYGAAYTLQEMLTVKSDDVNGRTKMYKNIVDGNHQMEPGMPESFNVLLKEIRSLGINIELEDE</sequence>
<organism>
    <name type="scientific">Enterobacter sp. (strain 638)</name>
    <dbReference type="NCBI Taxonomy" id="399742"/>
    <lineage>
        <taxon>Bacteria</taxon>
        <taxon>Pseudomonadati</taxon>
        <taxon>Pseudomonadota</taxon>
        <taxon>Gammaproteobacteria</taxon>
        <taxon>Enterobacterales</taxon>
        <taxon>Enterobacteriaceae</taxon>
        <taxon>Enterobacter</taxon>
    </lineage>
</organism>
<feature type="chain" id="PRO_1000067550" description="DNA-directed RNA polymerase subunit beta">
    <location>
        <begin position="1"/>
        <end position="1342"/>
    </location>
</feature>
<reference key="1">
    <citation type="journal article" date="2010" name="PLoS Genet.">
        <title>Genome sequence of the plant growth promoting endophytic bacterium Enterobacter sp. 638.</title>
        <authorList>
            <person name="Taghavi S."/>
            <person name="van der Lelie D."/>
            <person name="Hoffman A."/>
            <person name="Zhang Y.B."/>
            <person name="Walla M.D."/>
            <person name="Vangronsveld J."/>
            <person name="Newman L."/>
            <person name="Monchy S."/>
        </authorList>
    </citation>
    <scope>NUCLEOTIDE SEQUENCE [LARGE SCALE GENOMIC DNA]</scope>
    <source>
        <strain>638</strain>
    </source>
</reference>
<dbReference type="EC" id="2.7.7.6" evidence="1"/>
<dbReference type="EMBL" id="CP000653">
    <property type="protein sequence ID" value="ABP58887.1"/>
    <property type="molecule type" value="Genomic_DNA"/>
</dbReference>
<dbReference type="RefSeq" id="WP_011915461.1">
    <property type="nucleotide sequence ID" value="NC_009436.1"/>
</dbReference>
<dbReference type="SMR" id="A4W5A7"/>
<dbReference type="STRING" id="399742.Ent638_0197"/>
<dbReference type="KEGG" id="ent:Ent638_0197"/>
<dbReference type="eggNOG" id="COG0085">
    <property type="taxonomic scope" value="Bacteria"/>
</dbReference>
<dbReference type="HOGENOM" id="CLU_000524_4_0_6"/>
<dbReference type="OrthoDB" id="9803954at2"/>
<dbReference type="Proteomes" id="UP000000230">
    <property type="component" value="Chromosome"/>
</dbReference>
<dbReference type="GO" id="GO:0000428">
    <property type="term" value="C:DNA-directed RNA polymerase complex"/>
    <property type="evidence" value="ECO:0007669"/>
    <property type="project" value="UniProtKB-KW"/>
</dbReference>
<dbReference type="GO" id="GO:0003677">
    <property type="term" value="F:DNA binding"/>
    <property type="evidence" value="ECO:0007669"/>
    <property type="project" value="UniProtKB-UniRule"/>
</dbReference>
<dbReference type="GO" id="GO:0003899">
    <property type="term" value="F:DNA-directed RNA polymerase activity"/>
    <property type="evidence" value="ECO:0007669"/>
    <property type="project" value="UniProtKB-UniRule"/>
</dbReference>
<dbReference type="GO" id="GO:0032549">
    <property type="term" value="F:ribonucleoside binding"/>
    <property type="evidence" value="ECO:0007669"/>
    <property type="project" value="InterPro"/>
</dbReference>
<dbReference type="GO" id="GO:0006351">
    <property type="term" value="P:DNA-templated transcription"/>
    <property type="evidence" value="ECO:0007669"/>
    <property type="project" value="UniProtKB-UniRule"/>
</dbReference>
<dbReference type="CDD" id="cd00653">
    <property type="entry name" value="RNA_pol_B_RPB2"/>
    <property type="match status" value="1"/>
</dbReference>
<dbReference type="FunFam" id="2.30.150.10:FF:000001">
    <property type="entry name" value="DNA-directed RNA polymerase subunit beta"/>
    <property type="match status" value="1"/>
</dbReference>
<dbReference type="FunFam" id="2.40.270.10:FF:000003">
    <property type="entry name" value="DNA-directed RNA polymerase subunit beta"/>
    <property type="match status" value="1"/>
</dbReference>
<dbReference type="FunFam" id="2.40.270.10:FF:000004">
    <property type="entry name" value="DNA-directed RNA polymerase subunit beta"/>
    <property type="match status" value="1"/>
</dbReference>
<dbReference type="FunFam" id="2.40.50.100:FF:000006">
    <property type="entry name" value="DNA-directed RNA polymerase subunit beta"/>
    <property type="match status" value="1"/>
</dbReference>
<dbReference type="FunFam" id="2.40.50.150:FF:000001">
    <property type="entry name" value="DNA-directed RNA polymerase subunit beta"/>
    <property type="match status" value="1"/>
</dbReference>
<dbReference type="FunFam" id="3.90.1100.10:FF:000002">
    <property type="entry name" value="DNA-directed RNA polymerase subunit beta"/>
    <property type="match status" value="1"/>
</dbReference>
<dbReference type="FunFam" id="3.90.1110.10:FF:000001">
    <property type="entry name" value="DNA-directed RNA polymerase subunit beta"/>
    <property type="match status" value="1"/>
</dbReference>
<dbReference type="FunFam" id="3.90.1110.10:FF:000004">
    <property type="entry name" value="DNA-directed RNA polymerase subunit beta"/>
    <property type="match status" value="1"/>
</dbReference>
<dbReference type="FunFam" id="3.90.1800.10:FF:000001">
    <property type="entry name" value="DNA-directed RNA polymerase subunit beta"/>
    <property type="match status" value="1"/>
</dbReference>
<dbReference type="Gene3D" id="2.40.50.100">
    <property type="match status" value="1"/>
</dbReference>
<dbReference type="Gene3D" id="2.40.50.150">
    <property type="match status" value="1"/>
</dbReference>
<dbReference type="Gene3D" id="3.90.1100.10">
    <property type="match status" value="2"/>
</dbReference>
<dbReference type="Gene3D" id="6.10.140.1670">
    <property type="match status" value="1"/>
</dbReference>
<dbReference type="Gene3D" id="2.30.150.10">
    <property type="entry name" value="DNA-directed RNA polymerase, beta subunit, external 1 domain"/>
    <property type="match status" value="1"/>
</dbReference>
<dbReference type="Gene3D" id="2.40.270.10">
    <property type="entry name" value="DNA-directed RNA polymerase, subunit 2, domain 6"/>
    <property type="match status" value="1"/>
</dbReference>
<dbReference type="Gene3D" id="3.90.1800.10">
    <property type="entry name" value="RNA polymerase alpha subunit dimerisation domain"/>
    <property type="match status" value="1"/>
</dbReference>
<dbReference type="Gene3D" id="3.90.1110.10">
    <property type="entry name" value="RNA polymerase Rpb2, domain 2"/>
    <property type="match status" value="1"/>
</dbReference>
<dbReference type="HAMAP" id="MF_01321">
    <property type="entry name" value="RNApol_bact_RpoB"/>
    <property type="match status" value="1"/>
</dbReference>
<dbReference type="InterPro" id="IPR042107">
    <property type="entry name" value="DNA-dir_RNA_pol_bsu_ext_1_sf"/>
</dbReference>
<dbReference type="InterPro" id="IPR019462">
    <property type="entry name" value="DNA-dir_RNA_pol_bsu_external_1"/>
</dbReference>
<dbReference type="InterPro" id="IPR015712">
    <property type="entry name" value="DNA-dir_RNA_pol_su2"/>
</dbReference>
<dbReference type="InterPro" id="IPR007120">
    <property type="entry name" value="DNA-dir_RNAP_su2_dom"/>
</dbReference>
<dbReference type="InterPro" id="IPR037033">
    <property type="entry name" value="DNA-dir_RNAP_su2_hyb_sf"/>
</dbReference>
<dbReference type="InterPro" id="IPR010243">
    <property type="entry name" value="RNA_pol_bsu_bac"/>
</dbReference>
<dbReference type="InterPro" id="IPR007121">
    <property type="entry name" value="RNA_pol_bsu_CS"/>
</dbReference>
<dbReference type="InterPro" id="IPR007644">
    <property type="entry name" value="RNA_pol_bsu_protrusion"/>
</dbReference>
<dbReference type="InterPro" id="IPR007642">
    <property type="entry name" value="RNA_pol_Rpb2_2"/>
</dbReference>
<dbReference type="InterPro" id="IPR037034">
    <property type="entry name" value="RNA_pol_Rpb2_2_sf"/>
</dbReference>
<dbReference type="InterPro" id="IPR007645">
    <property type="entry name" value="RNA_pol_Rpb2_3"/>
</dbReference>
<dbReference type="InterPro" id="IPR007641">
    <property type="entry name" value="RNA_pol_Rpb2_7"/>
</dbReference>
<dbReference type="InterPro" id="IPR014724">
    <property type="entry name" value="RNA_pol_RPB2_OB-fold"/>
</dbReference>
<dbReference type="NCBIfam" id="NF001616">
    <property type="entry name" value="PRK00405.1"/>
    <property type="match status" value="1"/>
</dbReference>
<dbReference type="NCBIfam" id="TIGR02013">
    <property type="entry name" value="rpoB"/>
    <property type="match status" value="1"/>
</dbReference>
<dbReference type="PANTHER" id="PTHR20856">
    <property type="entry name" value="DNA-DIRECTED RNA POLYMERASE I SUBUNIT 2"/>
    <property type="match status" value="1"/>
</dbReference>
<dbReference type="Pfam" id="PF04563">
    <property type="entry name" value="RNA_pol_Rpb2_1"/>
    <property type="match status" value="1"/>
</dbReference>
<dbReference type="Pfam" id="PF04561">
    <property type="entry name" value="RNA_pol_Rpb2_2"/>
    <property type="match status" value="2"/>
</dbReference>
<dbReference type="Pfam" id="PF04565">
    <property type="entry name" value="RNA_pol_Rpb2_3"/>
    <property type="match status" value="1"/>
</dbReference>
<dbReference type="Pfam" id="PF10385">
    <property type="entry name" value="RNA_pol_Rpb2_45"/>
    <property type="match status" value="1"/>
</dbReference>
<dbReference type="Pfam" id="PF00562">
    <property type="entry name" value="RNA_pol_Rpb2_6"/>
    <property type="match status" value="1"/>
</dbReference>
<dbReference type="Pfam" id="PF04560">
    <property type="entry name" value="RNA_pol_Rpb2_7"/>
    <property type="match status" value="1"/>
</dbReference>
<dbReference type="SUPFAM" id="SSF64484">
    <property type="entry name" value="beta and beta-prime subunits of DNA dependent RNA-polymerase"/>
    <property type="match status" value="1"/>
</dbReference>
<dbReference type="PROSITE" id="PS01166">
    <property type="entry name" value="RNA_POL_BETA"/>
    <property type="match status" value="1"/>
</dbReference>